<feature type="chain" id="PRO_0000149670" description="Large ribosomal subunit protein eL21">
    <location>
        <begin position="1"/>
        <end position="160"/>
    </location>
</feature>
<feature type="region of interest" description="Disordered" evidence="3">
    <location>
        <begin position="112"/>
        <end position="145"/>
    </location>
</feature>
<feature type="compositionally biased region" description="Basic and acidic residues" evidence="3">
    <location>
        <begin position="112"/>
        <end position="123"/>
    </location>
</feature>
<feature type="compositionally biased region" description="Basic and acidic residues" evidence="3">
    <location>
        <begin position="136"/>
        <end position="145"/>
    </location>
</feature>
<feature type="sequence conflict" description="In Ref. 1; AAB52255." evidence="5" ref="1">
    <original>QP</original>
    <variation>HA</variation>
    <location>
        <begin position="131"/>
        <end position="132"/>
    </location>
</feature>
<keyword id="KW-0002">3D-structure</keyword>
<keyword id="KW-0963">Cytoplasm</keyword>
<keyword id="KW-0256">Endoplasmic reticulum</keyword>
<keyword id="KW-1185">Reference proteome</keyword>
<keyword id="KW-0687">Ribonucleoprotein</keyword>
<keyword id="KW-0689">Ribosomal protein</keyword>
<name>RL21_MOUSE</name>
<comment type="function">
    <text evidence="4">Component of the large ribosomal subunit (PubMed:36517592). The ribosome is a large ribonucleoprotein complex responsible for the synthesis of proteins in the cell (PubMed:36517592).</text>
</comment>
<comment type="subunit">
    <text evidence="4">Component of the large ribosomal subunit.</text>
</comment>
<comment type="subcellular location">
    <subcellularLocation>
        <location evidence="1">Cytoplasm</location>
        <location evidence="1">Cytosol</location>
    </subcellularLocation>
    <subcellularLocation>
        <location evidence="4">Cytoplasm</location>
    </subcellularLocation>
    <subcellularLocation>
        <location evidence="2">Endoplasmic reticulum</location>
    </subcellularLocation>
    <text evidence="1 2">Detected on cytosolic polysomes (By similarity). Detected in ribosomes that are associated with the rough endoplasmic reticulum (By similarity).</text>
</comment>
<comment type="similarity">
    <text evidence="5">Belongs to the eukaryotic ribosomal protein eL21 family.</text>
</comment>
<sequence length="160" mass="18579">MTNTKGKRRGTRYMFSRPFRKHGVVPLATYMRIYKKGDIVDIKGMGTVQKGMPHKCYHGKTGRVYNVTQHAVGIIVNKQVKGKILAKRINVRIEHIKHSKSRDSFLKRVKENDQKKKEAKEKGTWVQLKRQPAPPREAHFVRTNGKEPELLEPIPYEFMA</sequence>
<dbReference type="EMBL" id="U93863">
    <property type="protein sequence ID" value="AAB52255.1"/>
    <property type="molecule type" value="mRNA"/>
</dbReference>
<dbReference type="EMBL" id="AK002940">
    <property type="protein sequence ID" value="BAB22470.1"/>
    <property type="molecule type" value="mRNA"/>
</dbReference>
<dbReference type="EMBL" id="AK008457">
    <property type="protein sequence ID" value="BAB25679.1"/>
    <property type="molecule type" value="mRNA"/>
</dbReference>
<dbReference type="EMBL" id="AK018480">
    <property type="protein sequence ID" value="BAB31230.1"/>
    <property type="molecule type" value="mRNA"/>
</dbReference>
<dbReference type="EMBL" id="AK146440">
    <property type="protein sequence ID" value="BAE27174.1"/>
    <property type="molecule type" value="mRNA"/>
</dbReference>
<dbReference type="EMBL" id="AK168998">
    <property type="protein sequence ID" value="BAE40797.1"/>
    <property type="molecule type" value="mRNA"/>
</dbReference>
<dbReference type="EMBL" id="AC124828">
    <property type="status" value="NOT_ANNOTATED_CDS"/>
    <property type="molecule type" value="Genomic_DNA"/>
</dbReference>
<dbReference type="EMBL" id="BC086904">
    <property type="protein sequence ID" value="AAH86904.1"/>
    <property type="molecule type" value="mRNA"/>
</dbReference>
<dbReference type="EMBL" id="BC086905">
    <property type="protein sequence ID" value="AAH86905.1"/>
    <property type="molecule type" value="mRNA"/>
</dbReference>
<dbReference type="EMBL" id="BC086935">
    <property type="protein sequence ID" value="AAH86935.1"/>
    <property type="molecule type" value="mRNA"/>
</dbReference>
<dbReference type="EMBL" id="BC089582">
    <property type="protein sequence ID" value="AAH89582.1"/>
    <property type="molecule type" value="mRNA"/>
</dbReference>
<dbReference type="EMBL" id="BC090256">
    <property type="protein sequence ID" value="AAH90256.1"/>
    <property type="molecule type" value="mRNA"/>
</dbReference>
<dbReference type="EMBL" id="BC094410">
    <property type="protein sequence ID" value="AAH94410.1"/>
    <property type="molecule type" value="mRNA"/>
</dbReference>
<dbReference type="EMBL" id="BC096404">
    <property type="protein sequence ID" value="AAH96404.1"/>
    <property type="molecule type" value="mRNA"/>
</dbReference>
<dbReference type="EMBL" id="BC106116">
    <property type="protein sequence ID" value="AAI06117.1"/>
    <property type="molecule type" value="mRNA"/>
</dbReference>
<dbReference type="EMBL" id="BC138299">
    <property type="protein sequence ID" value="AAI38300.1"/>
    <property type="molecule type" value="mRNA"/>
</dbReference>
<dbReference type="EMBL" id="BC138300">
    <property type="protein sequence ID" value="AAI38301.1"/>
    <property type="molecule type" value="mRNA"/>
</dbReference>
<dbReference type="CCDS" id="CCDS19872.1"/>
<dbReference type="RefSeq" id="NP_001395917.1">
    <property type="nucleotide sequence ID" value="NM_001408988.1"/>
</dbReference>
<dbReference type="RefSeq" id="NP_001395918.1">
    <property type="nucleotide sequence ID" value="NM_001408989.1"/>
</dbReference>
<dbReference type="RefSeq" id="NP_062621.2">
    <property type="nucleotide sequence ID" value="NM_019647.6"/>
</dbReference>
<dbReference type="PDB" id="6SWA">
    <property type="method" value="EM"/>
    <property type="resolution" value="3.10 A"/>
    <property type="chains" value="R=1-160"/>
</dbReference>
<dbReference type="PDB" id="7CPU">
    <property type="method" value="EM"/>
    <property type="resolution" value="2.82 A"/>
    <property type="chains" value="LT=1-160"/>
</dbReference>
<dbReference type="PDB" id="7CPV">
    <property type="method" value="EM"/>
    <property type="resolution" value="3.03 A"/>
    <property type="chains" value="LT=1-160"/>
</dbReference>
<dbReference type="PDB" id="7LS1">
    <property type="method" value="EM"/>
    <property type="resolution" value="3.30 A"/>
    <property type="chains" value="N2=1-160"/>
</dbReference>
<dbReference type="PDB" id="7LS2">
    <property type="method" value="EM"/>
    <property type="resolution" value="3.10 A"/>
    <property type="chains" value="N2=1-160"/>
</dbReference>
<dbReference type="PDBsum" id="6SWA"/>
<dbReference type="PDBsum" id="7CPU"/>
<dbReference type="PDBsum" id="7CPV"/>
<dbReference type="PDBsum" id="7LS1"/>
<dbReference type="PDBsum" id="7LS2"/>
<dbReference type="EMDB" id="EMD-10321"/>
<dbReference type="EMDB" id="EMD-23500"/>
<dbReference type="EMDB" id="EMD-23501"/>
<dbReference type="EMDB" id="EMD-30432"/>
<dbReference type="EMDB" id="EMD-30433"/>
<dbReference type="SMR" id="O09167"/>
<dbReference type="ComplexPortal" id="CPX-5262">
    <property type="entry name" value="60S cytosolic large ribosomal subunit"/>
</dbReference>
<dbReference type="ComplexPortal" id="CPX-7662">
    <property type="entry name" value="60S cytosolic large ribosomal subunit, testis-specific variant"/>
</dbReference>
<dbReference type="ComplexPortal" id="CPX-7663">
    <property type="entry name" value="60S cytosolic large ribosomal subunit, striated muscle variant"/>
</dbReference>
<dbReference type="CORUM" id="O09167"/>
<dbReference type="FunCoup" id="O09167">
    <property type="interactions" value="1724"/>
</dbReference>
<dbReference type="IntAct" id="O09167">
    <property type="interactions" value="4"/>
</dbReference>
<dbReference type="MINT" id="O09167"/>
<dbReference type="STRING" id="10090.ENSMUSP00000041652"/>
<dbReference type="GlyGen" id="O09167">
    <property type="glycosylation" value="1 site, 1 O-linked glycan (1 site)"/>
</dbReference>
<dbReference type="iPTMnet" id="O09167"/>
<dbReference type="MetOSite" id="O09167"/>
<dbReference type="PhosphoSitePlus" id="O09167"/>
<dbReference type="SwissPalm" id="O09167"/>
<dbReference type="jPOST" id="O09167"/>
<dbReference type="PaxDb" id="10090-ENSMUSP00000041652"/>
<dbReference type="PeptideAtlas" id="O09167"/>
<dbReference type="ProteomicsDB" id="255157"/>
<dbReference type="ProteomicsDB" id="340538"/>
<dbReference type="Pumba" id="O09167"/>
<dbReference type="TopDownProteomics" id="Q9CQM8"/>
<dbReference type="DNASU" id="19933"/>
<dbReference type="Ensembl" id="ENSMUST00000035983.12">
    <property type="protein sequence ID" value="ENSMUSP00000041652.6"/>
    <property type="gene ID" value="ENSMUSG00000041453.13"/>
</dbReference>
<dbReference type="Ensembl" id="ENSMUST00000075453.9">
    <property type="protein sequence ID" value="ENSMUSP00000106213.2"/>
    <property type="gene ID" value="ENSMUSG00000041453.13"/>
</dbReference>
<dbReference type="Ensembl" id="ENSMUST00000099272.3">
    <property type="protein sequence ID" value="ENSMUSP00000106211.2"/>
    <property type="gene ID" value="ENSMUSG00000041453.13"/>
</dbReference>
<dbReference type="GeneID" id="19933"/>
<dbReference type="KEGG" id="mmu:19933"/>
<dbReference type="AGR" id="MGI:1278340"/>
<dbReference type="CTD" id="6144"/>
<dbReference type="MGI" id="MGI:1278340">
    <property type="gene designation" value="Rpl21"/>
</dbReference>
<dbReference type="VEuPathDB" id="HostDB:ENSMUSG00000041453"/>
<dbReference type="eggNOG" id="KOG1732">
    <property type="taxonomic scope" value="Eukaryota"/>
</dbReference>
<dbReference type="GeneTree" id="ENSGT00950000182922"/>
<dbReference type="HOGENOM" id="CLU_103610_0_1_1"/>
<dbReference type="InParanoid" id="O09167"/>
<dbReference type="OMA" id="INYGDYV"/>
<dbReference type="OrthoDB" id="9981295at2759"/>
<dbReference type="PhylomeDB" id="O09167"/>
<dbReference type="TreeFam" id="TF314640"/>
<dbReference type="Reactome" id="R-MMU-156827">
    <property type="pathway name" value="L13a-mediated translational silencing of Ceruloplasmin expression"/>
</dbReference>
<dbReference type="Reactome" id="R-MMU-1799339">
    <property type="pathway name" value="SRP-dependent cotranslational protein targeting to membrane"/>
</dbReference>
<dbReference type="Reactome" id="R-MMU-6791226">
    <property type="pathway name" value="Major pathway of rRNA processing in the nucleolus and cytosol"/>
</dbReference>
<dbReference type="Reactome" id="R-MMU-72689">
    <property type="pathway name" value="Formation of a pool of free 40S subunits"/>
</dbReference>
<dbReference type="Reactome" id="R-MMU-72706">
    <property type="pathway name" value="GTP hydrolysis and joining of the 60S ribosomal subunit"/>
</dbReference>
<dbReference type="Reactome" id="R-MMU-975956">
    <property type="pathway name" value="Nonsense Mediated Decay (NMD) independent of the Exon Junction Complex (EJC)"/>
</dbReference>
<dbReference type="Reactome" id="R-MMU-975957">
    <property type="pathway name" value="Nonsense Mediated Decay (NMD) enhanced by the Exon Junction Complex (EJC)"/>
</dbReference>
<dbReference type="BioGRID-ORCS" id="19933">
    <property type="hits" value="8 hits in 40 CRISPR screens"/>
</dbReference>
<dbReference type="CD-CODE" id="CE726F99">
    <property type="entry name" value="Postsynaptic density"/>
</dbReference>
<dbReference type="ChiTaRS" id="Rpl21">
    <property type="organism name" value="mouse"/>
</dbReference>
<dbReference type="PRO" id="PR:O09167"/>
<dbReference type="Proteomes" id="UP000000589">
    <property type="component" value="Chromosome 5"/>
</dbReference>
<dbReference type="RNAct" id="O09167">
    <property type="molecule type" value="protein"/>
</dbReference>
<dbReference type="Bgee" id="ENSMUSG00000041453">
    <property type="expression patterns" value="Expressed in ovary and 86 other cell types or tissues"/>
</dbReference>
<dbReference type="GO" id="GO:0005737">
    <property type="term" value="C:cytoplasm"/>
    <property type="evidence" value="ECO:0000314"/>
    <property type="project" value="ComplexPortal"/>
</dbReference>
<dbReference type="GO" id="GO:0005829">
    <property type="term" value="C:cytosol"/>
    <property type="evidence" value="ECO:0000304"/>
    <property type="project" value="Reactome"/>
</dbReference>
<dbReference type="GO" id="GO:0022625">
    <property type="term" value="C:cytosolic large ribosomal subunit"/>
    <property type="evidence" value="ECO:0000314"/>
    <property type="project" value="UniProtKB"/>
</dbReference>
<dbReference type="GO" id="GO:0005783">
    <property type="term" value="C:endoplasmic reticulum"/>
    <property type="evidence" value="ECO:0007669"/>
    <property type="project" value="UniProtKB-SubCell"/>
</dbReference>
<dbReference type="GO" id="GO:0098794">
    <property type="term" value="C:postsynapse"/>
    <property type="evidence" value="ECO:0000303"/>
    <property type="project" value="SynGO"/>
</dbReference>
<dbReference type="GO" id="GO:0005840">
    <property type="term" value="C:ribosome"/>
    <property type="evidence" value="ECO:0000303"/>
    <property type="project" value="SynGO"/>
</dbReference>
<dbReference type="GO" id="GO:0045202">
    <property type="term" value="C:synapse"/>
    <property type="evidence" value="ECO:0000314"/>
    <property type="project" value="SynGO"/>
</dbReference>
<dbReference type="GO" id="GO:0003735">
    <property type="term" value="F:structural constituent of ribosome"/>
    <property type="evidence" value="ECO:0000314"/>
    <property type="project" value="UniProtKB"/>
</dbReference>
<dbReference type="GO" id="GO:0002181">
    <property type="term" value="P:cytoplasmic translation"/>
    <property type="evidence" value="ECO:0000303"/>
    <property type="project" value="ComplexPortal"/>
</dbReference>
<dbReference type="FunFam" id="2.30.30.70:FF:000001">
    <property type="entry name" value="60S ribosomal protein L21"/>
    <property type="match status" value="1"/>
</dbReference>
<dbReference type="FunFam" id="6.10.250.3260:FF:000001">
    <property type="entry name" value="60S ribosomal protein L21"/>
    <property type="match status" value="1"/>
</dbReference>
<dbReference type="Gene3D" id="6.10.250.3260">
    <property type="match status" value="1"/>
</dbReference>
<dbReference type="Gene3D" id="2.30.30.70">
    <property type="entry name" value="Ribosomal protein L21"/>
    <property type="match status" value="1"/>
</dbReference>
<dbReference type="InterPro" id="IPR001147">
    <property type="entry name" value="Ribosomal_eL21"/>
</dbReference>
<dbReference type="InterPro" id="IPR018259">
    <property type="entry name" value="Ribosomal_eL21_CS"/>
</dbReference>
<dbReference type="InterPro" id="IPR036948">
    <property type="entry name" value="Ribosomal_eL21_sf"/>
</dbReference>
<dbReference type="InterPro" id="IPR008991">
    <property type="entry name" value="Translation_prot_SH3-like_sf"/>
</dbReference>
<dbReference type="PANTHER" id="PTHR20981">
    <property type="entry name" value="60S RIBOSOMAL PROTEIN L21"/>
    <property type="match status" value="1"/>
</dbReference>
<dbReference type="Pfam" id="PF01157">
    <property type="entry name" value="Ribosomal_L21e"/>
    <property type="match status" value="1"/>
</dbReference>
<dbReference type="SUPFAM" id="SSF50104">
    <property type="entry name" value="Translation proteins SH3-like domain"/>
    <property type="match status" value="1"/>
</dbReference>
<dbReference type="PROSITE" id="PS01171">
    <property type="entry name" value="RIBOSOMAL_L21E"/>
    <property type="match status" value="1"/>
</dbReference>
<accession>O09167</accession>
<accession>Q9CQM8</accession>
<gene>
    <name evidence="6" type="primary">Rpl21</name>
</gene>
<protein>
    <recommendedName>
        <fullName evidence="5">Large ribosomal subunit protein eL21</fullName>
    </recommendedName>
    <alternativeName>
        <fullName evidence="5">60S ribosomal protein L21</fullName>
    </alternativeName>
</protein>
<proteinExistence type="evidence at protein level"/>
<reference key="1">
    <citation type="submission" date="1997-04" db="EMBL/GenBank/DDBJ databases">
        <authorList>
            <person name="Rocha D."/>
            <person name="Anderson E."/>
            <person name="Botcherby M."/>
            <person name="Jordan B."/>
        </authorList>
    </citation>
    <scope>NUCLEOTIDE SEQUENCE [MRNA]</scope>
    <source>
        <strain>C57BL/6J</strain>
    </source>
</reference>
<reference key="2">
    <citation type="journal article" date="2005" name="Science">
        <title>The transcriptional landscape of the mammalian genome.</title>
        <authorList>
            <person name="Carninci P."/>
            <person name="Kasukawa T."/>
            <person name="Katayama S."/>
            <person name="Gough J."/>
            <person name="Frith M.C."/>
            <person name="Maeda N."/>
            <person name="Oyama R."/>
            <person name="Ravasi T."/>
            <person name="Lenhard B."/>
            <person name="Wells C."/>
            <person name="Kodzius R."/>
            <person name="Shimokawa K."/>
            <person name="Bajic V.B."/>
            <person name="Brenner S.E."/>
            <person name="Batalov S."/>
            <person name="Forrest A.R."/>
            <person name="Zavolan M."/>
            <person name="Davis M.J."/>
            <person name="Wilming L.G."/>
            <person name="Aidinis V."/>
            <person name="Allen J.E."/>
            <person name="Ambesi-Impiombato A."/>
            <person name="Apweiler R."/>
            <person name="Aturaliya R.N."/>
            <person name="Bailey T.L."/>
            <person name="Bansal M."/>
            <person name="Baxter L."/>
            <person name="Beisel K.W."/>
            <person name="Bersano T."/>
            <person name="Bono H."/>
            <person name="Chalk A.M."/>
            <person name="Chiu K.P."/>
            <person name="Choudhary V."/>
            <person name="Christoffels A."/>
            <person name="Clutterbuck D.R."/>
            <person name="Crowe M.L."/>
            <person name="Dalla E."/>
            <person name="Dalrymple B.P."/>
            <person name="de Bono B."/>
            <person name="Della Gatta G."/>
            <person name="di Bernardo D."/>
            <person name="Down T."/>
            <person name="Engstrom P."/>
            <person name="Fagiolini M."/>
            <person name="Faulkner G."/>
            <person name="Fletcher C.F."/>
            <person name="Fukushima T."/>
            <person name="Furuno M."/>
            <person name="Futaki S."/>
            <person name="Gariboldi M."/>
            <person name="Georgii-Hemming P."/>
            <person name="Gingeras T.R."/>
            <person name="Gojobori T."/>
            <person name="Green R.E."/>
            <person name="Gustincich S."/>
            <person name="Harbers M."/>
            <person name="Hayashi Y."/>
            <person name="Hensch T.K."/>
            <person name="Hirokawa N."/>
            <person name="Hill D."/>
            <person name="Huminiecki L."/>
            <person name="Iacono M."/>
            <person name="Ikeo K."/>
            <person name="Iwama A."/>
            <person name="Ishikawa T."/>
            <person name="Jakt M."/>
            <person name="Kanapin A."/>
            <person name="Katoh M."/>
            <person name="Kawasawa Y."/>
            <person name="Kelso J."/>
            <person name="Kitamura H."/>
            <person name="Kitano H."/>
            <person name="Kollias G."/>
            <person name="Krishnan S.P."/>
            <person name="Kruger A."/>
            <person name="Kummerfeld S.K."/>
            <person name="Kurochkin I.V."/>
            <person name="Lareau L.F."/>
            <person name="Lazarevic D."/>
            <person name="Lipovich L."/>
            <person name="Liu J."/>
            <person name="Liuni S."/>
            <person name="McWilliam S."/>
            <person name="Madan Babu M."/>
            <person name="Madera M."/>
            <person name="Marchionni L."/>
            <person name="Matsuda H."/>
            <person name="Matsuzawa S."/>
            <person name="Miki H."/>
            <person name="Mignone F."/>
            <person name="Miyake S."/>
            <person name="Morris K."/>
            <person name="Mottagui-Tabar S."/>
            <person name="Mulder N."/>
            <person name="Nakano N."/>
            <person name="Nakauchi H."/>
            <person name="Ng P."/>
            <person name="Nilsson R."/>
            <person name="Nishiguchi S."/>
            <person name="Nishikawa S."/>
            <person name="Nori F."/>
            <person name="Ohara O."/>
            <person name="Okazaki Y."/>
            <person name="Orlando V."/>
            <person name="Pang K.C."/>
            <person name="Pavan W.J."/>
            <person name="Pavesi G."/>
            <person name="Pesole G."/>
            <person name="Petrovsky N."/>
            <person name="Piazza S."/>
            <person name="Reed J."/>
            <person name="Reid J.F."/>
            <person name="Ring B.Z."/>
            <person name="Ringwald M."/>
            <person name="Rost B."/>
            <person name="Ruan Y."/>
            <person name="Salzberg S.L."/>
            <person name="Sandelin A."/>
            <person name="Schneider C."/>
            <person name="Schoenbach C."/>
            <person name="Sekiguchi K."/>
            <person name="Semple C.A."/>
            <person name="Seno S."/>
            <person name="Sessa L."/>
            <person name="Sheng Y."/>
            <person name="Shibata Y."/>
            <person name="Shimada H."/>
            <person name="Shimada K."/>
            <person name="Silva D."/>
            <person name="Sinclair B."/>
            <person name="Sperling S."/>
            <person name="Stupka E."/>
            <person name="Sugiura K."/>
            <person name="Sultana R."/>
            <person name="Takenaka Y."/>
            <person name="Taki K."/>
            <person name="Tammoja K."/>
            <person name="Tan S.L."/>
            <person name="Tang S."/>
            <person name="Taylor M.S."/>
            <person name="Tegner J."/>
            <person name="Teichmann S.A."/>
            <person name="Ueda H.R."/>
            <person name="van Nimwegen E."/>
            <person name="Verardo R."/>
            <person name="Wei C.L."/>
            <person name="Yagi K."/>
            <person name="Yamanishi H."/>
            <person name="Zabarovsky E."/>
            <person name="Zhu S."/>
            <person name="Zimmer A."/>
            <person name="Hide W."/>
            <person name="Bult C."/>
            <person name="Grimmond S.M."/>
            <person name="Teasdale R.D."/>
            <person name="Liu E.T."/>
            <person name="Brusic V."/>
            <person name="Quackenbush J."/>
            <person name="Wahlestedt C."/>
            <person name="Mattick J.S."/>
            <person name="Hume D.A."/>
            <person name="Kai C."/>
            <person name="Sasaki D."/>
            <person name="Tomaru Y."/>
            <person name="Fukuda S."/>
            <person name="Kanamori-Katayama M."/>
            <person name="Suzuki M."/>
            <person name="Aoki J."/>
            <person name="Arakawa T."/>
            <person name="Iida J."/>
            <person name="Imamura K."/>
            <person name="Itoh M."/>
            <person name="Kato T."/>
            <person name="Kawaji H."/>
            <person name="Kawagashira N."/>
            <person name="Kawashima T."/>
            <person name="Kojima M."/>
            <person name="Kondo S."/>
            <person name="Konno H."/>
            <person name="Nakano K."/>
            <person name="Ninomiya N."/>
            <person name="Nishio T."/>
            <person name="Okada M."/>
            <person name="Plessy C."/>
            <person name="Shibata K."/>
            <person name="Shiraki T."/>
            <person name="Suzuki S."/>
            <person name="Tagami M."/>
            <person name="Waki K."/>
            <person name="Watahiki A."/>
            <person name="Okamura-Oho Y."/>
            <person name="Suzuki H."/>
            <person name="Kawai J."/>
            <person name="Hayashizaki Y."/>
        </authorList>
    </citation>
    <scope>NUCLEOTIDE SEQUENCE [LARGE SCALE MRNA]</scope>
</reference>
<reference key="3">
    <citation type="journal article" date="2009" name="PLoS Biol.">
        <title>Lineage-specific biology revealed by a finished genome assembly of the mouse.</title>
        <authorList>
            <person name="Church D.M."/>
            <person name="Goodstadt L."/>
            <person name="Hillier L.W."/>
            <person name="Zody M.C."/>
            <person name="Goldstein S."/>
            <person name="She X."/>
            <person name="Bult C.J."/>
            <person name="Agarwala R."/>
            <person name="Cherry J.L."/>
            <person name="DiCuccio M."/>
            <person name="Hlavina W."/>
            <person name="Kapustin Y."/>
            <person name="Meric P."/>
            <person name="Maglott D."/>
            <person name="Birtle Z."/>
            <person name="Marques A.C."/>
            <person name="Graves T."/>
            <person name="Zhou S."/>
            <person name="Teague B."/>
            <person name="Potamousis K."/>
            <person name="Churas C."/>
            <person name="Place M."/>
            <person name="Herschleb J."/>
            <person name="Runnheim R."/>
            <person name="Forrest D."/>
            <person name="Amos-Landgraf J."/>
            <person name="Schwartz D.C."/>
            <person name="Cheng Z."/>
            <person name="Lindblad-Toh K."/>
            <person name="Eichler E.E."/>
            <person name="Ponting C.P."/>
        </authorList>
    </citation>
    <scope>NUCLEOTIDE SEQUENCE [LARGE SCALE GENOMIC DNA]</scope>
    <source>
        <strain>C57BL/6J</strain>
    </source>
</reference>
<reference key="4">
    <citation type="journal article" date="2004" name="Genome Res.">
        <title>The status, quality, and expansion of the NIH full-length cDNA project: the Mammalian Gene Collection (MGC).</title>
        <authorList>
            <consortium name="The MGC Project Team"/>
        </authorList>
    </citation>
    <scope>NUCLEOTIDE SEQUENCE [LARGE SCALE MRNA]</scope>
    <source>
        <strain>C57BL/6J</strain>
        <tissue>Brain</tissue>
        <tissue>Heart</tissue>
        <tissue>Kidney</tissue>
        <tissue>Mammary gland</tissue>
    </source>
</reference>
<reference key="5">
    <citation type="journal article" date="2010" name="Cell">
        <title>A tissue-specific atlas of mouse protein phosphorylation and expression.</title>
        <authorList>
            <person name="Huttlin E.L."/>
            <person name="Jedrychowski M.P."/>
            <person name="Elias J.E."/>
            <person name="Goswami T."/>
            <person name="Rad R."/>
            <person name="Beausoleil S.A."/>
            <person name="Villen J."/>
            <person name="Haas W."/>
            <person name="Sowa M.E."/>
            <person name="Gygi S.P."/>
        </authorList>
    </citation>
    <scope>IDENTIFICATION BY MASS SPECTROMETRY [LARGE SCALE ANALYSIS]</scope>
    <source>
        <tissue>Brain</tissue>
        <tissue>Brown adipose tissue</tissue>
        <tissue>Heart</tissue>
        <tissue>Kidney</tissue>
        <tissue>Liver</tissue>
        <tissue>Lung</tissue>
        <tissue>Pancreas</tissue>
        <tissue>Spleen</tissue>
        <tissue>Testis</tissue>
    </source>
</reference>
<reference evidence="7 8" key="6">
    <citation type="journal article" date="2022" name="Nature">
        <title>A male germ-cell-specific ribosome controls male fertility.</title>
        <authorList>
            <person name="Li H."/>
            <person name="Huo Y."/>
            <person name="He X."/>
            <person name="Yao L."/>
            <person name="Zhang H."/>
            <person name="Cui Y."/>
            <person name="Xiao H."/>
            <person name="Xie W."/>
            <person name="Zhang D."/>
            <person name="Wang Y."/>
            <person name="Zhang S."/>
            <person name="Tu H."/>
            <person name="Cheng Y."/>
            <person name="Guo Y."/>
            <person name="Cao X."/>
            <person name="Zhu Y."/>
            <person name="Jiang T."/>
            <person name="Guo X."/>
            <person name="Qin Y."/>
            <person name="Sha J."/>
        </authorList>
    </citation>
    <scope>STRUCTURE BY ELECTRON MICROSCOPY (3.03 ANGSTROMS) OF RIBOSOME</scope>
    <scope>FUNCTION</scope>
    <scope>SUBUNIT</scope>
    <scope>SUBCELLULAR LOCATION</scope>
</reference>
<organism>
    <name type="scientific">Mus musculus</name>
    <name type="common">Mouse</name>
    <dbReference type="NCBI Taxonomy" id="10090"/>
    <lineage>
        <taxon>Eukaryota</taxon>
        <taxon>Metazoa</taxon>
        <taxon>Chordata</taxon>
        <taxon>Craniata</taxon>
        <taxon>Vertebrata</taxon>
        <taxon>Euteleostomi</taxon>
        <taxon>Mammalia</taxon>
        <taxon>Eutheria</taxon>
        <taxon>Euarchontoglires</taxon>
        <taxon>Glires</taxon>
        <taxon>Rodentia</taxon>
        <taxon>Myomorpha</taxon>
        <taxon>Muroidea</taxon>
        <taxon>Muridae</taxon>
        <taxon>Murinae</taxon>
        <taxon>Mus</taxon>
        <taxon>Mus</taxon>
    </lineage>
</organism>
<evidence type="ECO:0000250" key="1">
    <source>
        <dbReference type="UniProtKB" id="P46778"/>
    </source>
</evidence>
<evidence type="ECO:0000250" key="2">
    <source>
        <dbReference type="UniProtKB" id="P49666"/>
    </source>
</evidence>
<evidence type="ECO:0000256" key="3">
    <source>
        <dbReference type="SAM" id="MobiDB-lite"/>
    </source>
</evidence>
<evidence type="ECO:0000269" key="4">
    <source>
    </source>
</evidence>
<evidence type="ECO:0000305" key="5"/>
<evidence type="ECO:0000312" key="6">
    <source>
        <dbReference type="MGI" id="MGI:1278340"/>
    </source>
</evidence>
<evidence type="ECO:0007744" key="7">
    <source>
        <dbReference type="PDB" id="7CPU"/>
    </source>
</evidence>
<evidence type="ECO:0007744" key="8">
    <source>
        <dbReference type="PDB" id="7CPV"/>
    </source>
</evidence>